<evidence type="ECO:0000250" key="1">
    <source>
        <dbReference type="UniProtKB" id="P53104"/>
    </source>
</evidence>
<evidence type="ECO:0000255" key="2">
    <source>
        <dbReference type="PROSITE-ProRule" id="PRU00159"/>
    </source>
</evidence>
<evidence type="ECO:0000255" key="3">
    <source>
        <dbReference type="PROSITE-ProRule" id="PRU10027"/>
    </source>
</evidence>
<evidence type="ECO:0000256" key="4">
    <source>
        <dbReference type="SAM" id="MobiDB-lite"/>
    </source>
</evidence>
<evidence type="ECO:0000303" key="5">
    <source>
    </source>
</evidence>
<feature type="chain" id="PRO_0000085639" description="Serine/threonine-protein kinase atg1">
    <location>
        <begin position="1"/>
        <end position="973"/>
    </location>
</feature>
<feature type="domain" description="Protein kinase" evidence="2">
    <location>
        <begin position="23"/>
        <end position="328"/>
    </location>
</feature>
<feature type="region of interest" description="Disordered" evidence="4">
    <location>
        <begin position="338"/>
        <end position="446"/>
    </location>
</feature>
<feature type="region of interest" description="Disordered" evidence="4">
    <location>
        <begin position="460"/>
        <end position="482"/>
    </location>
</feature>
<feature type="region of interest" description="Disordered" evidence="4">
    <location>
        <begin position="523"/>
        <end position="587"/>
    </location>
</feature>
<feature type="region of interest" description="Disordered" evidence="4">
    <location>
        <begin position="949"/>
        <end position="973"/>
    </location>
</feature>
<feature type="compositionally biased region" description="Polar residues" evidence="4">
    <location>
        <begin position="387"/>
        <end position="407"/>
    </location>
</feature>
<feature type="compositionally biased region" description="Polar residues" evidence="4">
    <location>
        <begin position="523"/>
        <end position="537"/>
    </location>
</feature>
<feature type="compositionally biased region" description="Basic and acidic residues" evidence="4">
    <location>
        <begin position="566"/>
        <end position="582"/>
    </location>
</feature>
<feature type="compositionally biased region" description="Polar residues" evidence="4">
    <location>
        <begin position="951"/>
        <end position="965"/>
    </location>
</feature>
<feature type="active site" description="Proton acceptor" evidence="2 3">
    <location>
        <position position="166"/>
    </location>
</feature>
<feature type="binding site" evidence="2">
    <location>
        <begin position="29"/>
        <end position="37"/>
    </location>
    <ligand>
        <name>ATP</name>
        <dbReference type="ChEBI" id="CHEBI:30616"/>
    </ligand>
</feature>
<feature type="binding site" evidence="2">
    <location>
        <position position="52"/>
    </location>
    <ligand>
        <name>ATP</name>
        <dbReference type="ChEBI" id="CHEBI:30616"/>
    </ligand>
</feature>
<dbReference type="EC" id="2.7.11.1" evidence="1"/>
<dbReference type="EMBL" id="AAHF01000005">
    <property type="protein sequence ID" value="EAL89882.1"/>
    <property type="molecule type" value="Genomic_DNA"/>
</dbReference>
<dbReference type="RefSeq" id="XP_751920.1">
    <property type="nucleotide sequence ID" value="XM_746827.1"/>
</dbReference>
<dbReference type="SMR" id="Q4WPF2"/>
<dbReference type="FunCoup" id="Q4WPF2">
    <property type="interactions" value="75"/>
</dbReference>
<dbReference type="STRING" id="330879.Q4WPF2"/>
<dbReference type="EnsemblFungi" id="EAL89882">
    <property type="protein sequence ID" value="EAL89882"/>
    <property type="gene ID" value="AFUA_4G09050"/>
</dbReference>
<dbReference type="GeneID" id="3509449"/>
<dbReference type="KEGG" id="afm:AFUA_4G09050"/>
<dbReference type="VEuPathDB" id="FungiDB:Afu4g09050"/>
<dbReference type="eggNOG" id="KOG0595">
    <property type="taxonomic scope" value="Eukaryota"/>
</dbReference>
<dbReference type="HOGENOM" id="CLU_006447_0_0_1"/>
<dbReference type="InParanoid" id="Q4WPF2"/>
<dbReference type="OMA" id="INNVVQW"/>
<dbReference type="OrthoDB" id="346907at2759"/>
<dbReference type="Proteomes" id="UP000002530">
    <property type="component" value="Chromosome 4"/>
</dbReference>
<dbReference type="GO" id="GO:1990316">
    <property type="term" value="C:Atg1/ULK1 kinase complex"/>
    <property type="evidence" value="ECO:0007669"/>
    <property type="project" value="EnsemblFungi"/>
</dbReference>
<dbReference type="GO" id="GO:0005776">
    <property type="term" value="C:autophagosome"/>
    <property type="evidence" value="ECO:0000314"/>
    <property type="project" value="AspGD"/>
</dbReference>
<dbReference type="GO" id="GO:0000421">
    <property type="term" value="C:autophagosome membrane"/>
    <property type="evidence" value="ECO:0007669"/>
    <property type="project" value="EnsemblFungi"/>
</dbReference>
<dbReference type="GO" id="GO:0005737">
    <property type="term" value="C:cytoplasm"/>
    <property type="evidence" value="ECO:0000314"/>
    <property type="project" value="AspGD"/>
</dbReference>
<dbReference type="GO" id="GO:0005829">
    <property type="term" value="C:cytosol"/>
    <property type="evidence" value="ECO:0000318"/>
    <property type="project" value="GO_Central"/>
</dbReference>
<dbReference type="GO" id="GO:0061908">
    <property type="term" value="C:phagophore"/>
    <property type="evidence" value="ECO:0007669"/>
    <property type="project" value="EnsemblFungi"/>
</dbReference>
<dbReference type="GO" id="GO:0000407">
    <property type="term" value="C:phagophore assembly site"/>
    <property type="evidence" value="ECO:0000318"/>
    <property type="project" value="GO_Central"/>
</dbReference>
<dbReference type="GO" id="GO:0034045">
    <property type="term" value="C:phagophore assembly site membrane"/>
    <property type="evidence" value="ECO:0000318"/>
    <property type="project" value="GO_Central"/>
</dbReference>
<dbReference type="GO" id="GO:0120095">
    <property type="term" value="C:vacuole-isolation membrane contact site"/>
    <property type="evidence" value="ECO:0007669"/>
    <property type="project" value="EnsemblFungi"/>
</dbReference>
<dbReference type="GO" id="GO:0005524">
    <property type="term" value="F:ATP binding"/>
    <property type="evidence" value="ECO:0007669"/>
    <property type="project" value="UniProtKB-KW"/>
</dbReference>
<dbReference type="GO" id="GO:0106310">
    <property type="term" value="F:protein serine kinase activity"/>
    <property type="evidence" value="ECO:0007669"/>
    <property type="project" value="RHEA"/>
</dbReference>
<dbReference type="GO" id="GO:0004674">
    <property type="term" value="F:protein serine/threonine kinase activity"/>
    <property type="evidence" value="ECO:0000318"/>
    <property type="project" value="GO_Central"/>
</dbReference>
<dbReference type="GO" id="GO:0000045">
    <property type="term" value="P:autophagosome assembly"/>
    <property type="evidence" value="ECO:0000318"/>
    <property type="project" value="GO_Central"/>
</dbReference>
<dbReference type="GO" id="GO:0006995">
    <property type="term" value="P:cellular response to nitrogen starvation"/>
    <property type="evidence" value="ECO:0007669"/>
    <property type="project" value="EnsemblFungi"/>
</dbReference>
<dbReference type="GO" id="GO:0051365">
    <property type="term" value="P:cellular response to potassium ion starvation"/>
    <property type="evidence" value="ECO:0007669"/>
    <property type="project" value="EnsemblFungi"/>
</dbReference>
<dbReference type="GO" id="GO:0000423">
    <property type="term" value="P:mitophagy"/>
    <property type="evidence" value="ECO:0000318"/>
    <property type="project" value="GO_Central"/>
</dbReference>
<dbReference type="GO" id="GO:0034727">
    <property type="term" value="P:piecemeal microautophagy of the nucleus"/>
    <property type="evidence" value="ECO:0000318"/>
    <property type="project" value="GO_Central"/>
</dbReference>
<dbReference type="GO" id="GO:0034497">
    <property type="term" value="P:protein localization to phagophore assembly site"/>
    <property type="evidence" value="ECO:0007669"/>
    <property type="project" value="EnsemblFungi"/>
</dbReference>
<dbReference type="GO" id="GO:0015031">
    <property type="term" value="P:protein transport"/>
    <property type="evidence" value="ECO:0007669"/>
    <property type="project" value="UniProtKB-KW"/>
</dbReference>
<dbReference type="GO" id="GO:0010506">
    <property type="term" value="P:regulation of autophagy"/>
    <property type="evidence" value="ECO:0000318"/>
    <property type="project" value="GO_Central"/>
</dbReference>
<dbReference type="GO" id="GO:0042594">
    <property type="term" value="P:response to starvation"/>
    <property type="evidence" value="ECO:0000318"/>
    <property type="project" value="GO_Central"/>
</dbReference>
<dbReference type="GO" id="GO:0061709">
    <property type="term" value="P:reticulophagy"/>
    <property type="evidence" value="ECO:0000318"/>
    <property type="project" value="GO_Central"/>
</dbReference>
<dbReference type="CDD" id="cd14009">
    <property type="entry name" value="STKc_ATG1_ULK_like"/>
    <property type="match status" value="1"/>
</dbReference>
<dbReference type="FunFam" id="1.10.510.10:FF:000817">
    <property type="entry name" value="Serine/threonine-protein kinase ATG1"/>
    <property type="match status" value="1"/>
</dbReference>
<dbReference type="FunFam" id="3.30.200.20:FF:000399">
    <property type="entry name" value="Serine/threonine-protein kinase atg1"/>
    <property type="match status" value="1"/>
</dbReference>
<dbReference type="Gene3D" id="3.30.200.20">
    <property type="entry name" value="Phosphorylase Kinase, domain 1"/>
    <property type="match status" value="1"/>
</dbReference>
<dbReference type="Gene3D" id="1.10.510.10">
    <property type="entry name" value="Transferase(Phosphotransferase) domain 1"/>
    <property type="match status" value="1"/>
</dbReference>
<dbReference type="InterPro" id="IPR045269">
    <property type="entry name" value="Atg1-like"/>
</dbReference>
<dbReference type="InterPro" id="IPR048941">
    <property type="entry name" value="ATG1-like_MIT2"/>
</dbReference>
<dbReference type="InterPro" id="IPR022708">
    <property type="entry name" value="Atg1-like_tMIT"/>
</dbReference>
<dbReference type="InterPro" id="IPR011009">
    <property type="entry name" value="Kinase-like_dom_sf"/>
</dbReference>
<dbReference type="InterPro" id="IPR000719">
    <property type="entry name" value="Prot_kinase_dom"/>
</dbReference>
<dbReference type="InterPro" id="IPR017441">
    <property type="entry name" value="Protein_kinase_ATP_BS"/>
</dbReference>
<dbReference type="InterPro" id="IPR008271">
    <property type="entry name" value="Ser/Thr_kinase_AS"/>
</dbReference>
<dbReference type="PANTHER" id="PTHR24348:SF22">
    <property type="entry name" value="NON-SPECIFIC SERINE_THREONINE PROTEIN KINASE"/>
    <property type="match status" value="1"/>
</dbReference>
<dbReference type="PANTHER" id="PTHR24348">
    <property type="entry name" value="SERINE/THREONINE-PROTEIN KINASE UNC-51-RELATED"/>
    <property type="match status" value="1"/>
</dbReference>
<dbReference type="Pfam" id="PF12063">
    <property type="entry name" value="ATG1-like_MIT1"/>
    <property type="match status" value="1"/>
</dbReference>
<dbReference type="Pfam" id="PF21127">
    <property type="entry name" value="ATG1-like_MIT2"/>
    <property type="match status" value="1"/>
</dbReference>
<dbReference type="Pfam" id="PF00069">
    <property type="entry name" value="Pkinase"/>
    <property type="match status" value="1"/>
</dbReference>
<dbReference type="SMART" id="SM00220">
    <property type="entry name" value="S_TKc"/>
    <property type="match status" value="1"/>
</dbReference>
<dbReference type="SUPFAM" id="SSF56112">
    <property type="entry name" value="Protein kinase-like (PK-like)"/>
    <property type="match status" value="1"/>
</dbReference>
<dbReference type="PROSITE" id="PS00107">
    <property type="entry name" value="PROTEIN_KINASE_ATP"/>
    <property type="match status" value="1"/>
</dbReference>
<dbReference type="PROSITE" id="PS50011">
    <property type="entry name" value="PROTEIN_KINASE_DOM"/>
    <property type="match status" value="1"/>
</dbReference>
<dbReference type="PROSITE" id="PS00108">
    <property type="entry name" value="PROTEIN_KINASE_ST"/>
    <property type="match status" value="1"/>
</dbReference>
<keyword id="KW-0067">ATP-binding</keyword>
<keyword id="KW-0072">Autophagy</keyword>
<keyword id="KW-0963">Cytoplasm</keyword>
<keyword id="KW-0418">Kinase</keyword>
<keyword id="KW-0472">Membrane</keyword>
<keyword id="KW-0547">Nucleotide-binding</keyword>
<keyword id="KW-0653">Protein transport</keyword>
<keyword id="KW-1185">Reference proteome</keyword>
<keyword id="KW-0723">Serine/threonine-protein kinase</keyword>
<keyword id="KW-0808">Transferase</keyword>
<keyword id="KW-0813">Transport</keyword>
<name>ATG1_ASPFU</name>
<protein>
    <recommendedName>
        <fullName evidence="1">Serine/threonine-protein kinase atg1</fullName>
        <ecNumber evidence="1">2.7.11.1</ecNumber>
    </recommendedName>
    <alternativeName>
        <fullName evidence="1">Autophagy-related protein 1</fullName>
    </alternativeName>
</protein>
<gene>
    <name evidence="1" type="primary">atg1</name>
    <name evidence="5" type="ORF">AFUA_4G09050</name>
</gene>
<proteinExistence type="inferred from homology"/>
<comment type="function">
    <text evidence="1">Serine/threonine protein kinase involved in the cytoplasm to vacuole transport (Cvt) and found to be essential in autophagy, where it is required for the formation of autophagosomes. Involved in the clearance of protein aggregates which cannot be efficiently cleared by the proteasome. Required for selective autophagic degradation of the nucleus (nucleophagy) as well as for mitophagy which contributes to regulate mitochondrial quantity and quality by eliminating the mitochondria to a basal level to fulfill cellular energy requirements and preventing excess ROS production. Also involved in endoplasmic reticulum-specific autophagic process, in selective removal of ER-associated degradation (ERAD) substrates. Plays a key role in ATG9 and ATG23 cycling through the pre-autophagosomal structure and is necessary to promote ATG18 binding to ATG9 through phosphorylation of ATG9. Catalyzes phosphorylation of ATG4, decreasing the interaction between ATG4 and ATG8 and impairing deconjugation of PE-conjugated forms of ATG8.</text>
</comment>
<comment type="catalytic activity">
    <reaction evidence="1">
        <text>L-seryl-[protein] + ATP = O-phospho-L-seryl-[protein] + ADP + H(+)</text>
        <dbReference type="Rhea" id="RHEA:17989"/>
        <dbReference type="Rhea" id="RHEA-COMP:9863"/>
        <dbReference type="Rhea" id="RHEA-COMP:11604"/>
        <dbReference type="ChEBI" id="CHEBI:15378"/>
        <dbReference type="ChEBI" id="CHEBI:29999"/>
        <dbReference type="ChEBI" id="CHEBI:30616"/>
        <dbReference type="ChEBI" id="CHEBI:83421"/>
        <dbReference type="ChEBI" id="CHEBI:456216"/>
        <dbReference type="EC" id="2.7.11.1"/>
    </reaction>
</comment>
<comment type="catalytic activity">
    <reaction evidence="1">
        <text>L-threonyl-[protein] + ATP = O-phospho-L-threonyl-[protein] + ADP + H(+)</text>
        <dbReference type="Rhea" id="RHEA:46608"/>
        <dbReference type="Rhea" id="RHEA-COMP:11060"/>
        <dbReference type="Rhea" id="RHEA-COMP:11605"/>
        <dbReference type="ChEBI" id="CHEBI:15378"/>
        <dbReference type="ChEBI" id="CHEBI:30013"/>
        <dbReference type="ChEBI" id="CHEBI:30616"/>
        <dbReference type="ChEBI" id="CHEBI:61977"/>
        <dbReference type="ChEBI" id="CHEBI:456216"/>
        <dbReference type="EC" id="2.7.11.1"/>
    </reaction>
</comment>
<comment type="subunit">
    <text evidence="1">Homodimer. Forms a ternary complex with ATG13 and ATG17.</text>
</comment>
<comment type="subcellular location">
    <subcellularLocation>
        <location evidence="1">Cytoplasm</location>
    </subcellularLocation>
    <subcellularLocation>
        <location evidence="1">Preautophagosomal structure membrane</location>
        <topology evidence="1">Peripheral membrane protein</topology>
    </subcellularLocation>
</comment>
<comment type="similarity">
    <text evidence="2">Belongs to the protein kinase superfamily. Ser/Thr protein kinase family. APG1/unc-51/ULK1 subfamily.</text>
</comment>
<accession>Q4WPF2</accession>
<sequence length="973" mass="106080">MTSTHHSRRSRETPQPEMSIGRYTRLDEIGRGSFATVYQGVHTKTRTYVAIKSVNLSKLNKKLKDNLSSEIHILKGLYHPHIVALIDCHETTSHIHLVMEYCALGDLSLFIKRRDTLGDHRYTRDMIAKYPNPPGGALNEVVVRHFLKQLASALKFLRDRNLIHRDIKPQNLLLCPSPSSYRSGVTQVVPFKGSEDSFNPATGLESLPLLKIADFGFARSLPATSLAETLCGSPLYMAPEILRYEKYDAKADLWSVGTVLYEMVVGKPPFRATNHVELLRKIEKGEDRIKFPEENPASDEIKALIRALLKRNPVERLNFPDFFQNGVITSPIPGLVADDLPSIPQGPPADPETAEATPRPDSRSGATVPGGTEREREGPSLPKGDTGLTQRPPSQNQRFGTPQTTTPMRRIGSGDRPPSTPKESTPPMTYPQRPSAVSHATAPGRQELVDRNATFTAMERQKGRNTFSEGSPQIDRQADKLREERERAAQDVAFERDYVVVEKRAVEVNAFADELAHSPRIQGNISRGAQTGALSRRSTVHGPTPSNPSPPQATVGKAMQVLSGRSRADSMHNRQGSYERRYGQSPTSATSAISKALNMASGRLFGMGFSPPLAITKGGRSPPLAYNPFPAYPAHGSLMIGDGAKSNLALDEDTKTVQILEECATRSDVVYGFAEVKYKQLVPLAPSVQTDPSSKLNLAGERENPDSADGGLTVDAIVTLSEEALVLYVKALSLLAKSMDIAGAWWARKNRGDGFGDSAMSRANGASTLAGTRINNVVQWIRNRFNEVLEKGEFVRLKLIEAQKRLPPDHPSHPDNHSVGSSLGSGASVDVVVSPGVSAEKLMYDRALEMSRTAAINELTGEDLSGCEIAYVTAIRMLEAVLENGEVPRFGQDKDDTSKDSDKIVLDAVQADERQVVIKLLTIQAVVASIRSRLAALRKKLAILAKRAPTPSANVPSKMASSNPVSVGATPPK</sequence>
<organism>
    <name type="scientific">Aspergillus fumigatus (strain ATCC MYA-4609 / CBS 101355 / FGSC A1100 / Af293)</name>
    <name type="common">Neosartorya fumigata</name>
    <dbReference type="NCBI Taxonomy" id="330879"/>
    <lineage>
        <taxon>Eukaryota</taxon>
        <taxon>Fungi</taxon>
        <taxon>Dikarya</taxon>
        <taxon>Ascomycota</taxon>
        <taxon>Pezizomycotina</taxon>
        <taxon>Eurotiomycetes</taxon>
        <taxon>Eurotiomycetidae</taxon>
        <taxon>Eurotiales</taxon>
        <taxon>Aspergillaceae</taxon>
        <taxon>Aspergillus</taxon>
        <taxon>Aspergillus subgen. Fumigati</taxon>
    </lineage>
</organism>
<reference key="1">
    <citation type="journal article" date="2005" name="Nature">
        <title>Genomic sequence of the pathogenic and allergenic filamentous fungus Aspergillus fumigatus.</title>
        <authorList>
            <person name="Nierman W.C."/>
            <person name="Pain A."/>
            <person name="Anderson M.J."/>
            <person name="Wortman J.R."/>
            <person name="Kim H.S."/>
            <person name="Arroyo J."/>
            <person name="Berriman M."/>
            <person name="Abe K."/>
            <person name="Archer D.B."/>
            <person name="Bermejo C."/>
            <person name="Bennett J.W."/>
            <person name="Bowyer P."/>
            <person name="Chen D."/>
            <person name="Collins M."/>
            <person name="Coulsen R."/>
            <person name="Davies R."/>
            <person name="Dyer P.S."/>
            <person name="Farman M.L."/>
            <person name="Fedorova N."/>
            <person name="Fedorova N.D."/>
            <person name="Feldblyum T.V."/>
            <person name="Fischer R."/>
            <person name="Fosker N."/>
            <person name="Fraser A."/>
            <person name="Garcia J.L."/>
            <person name="Garcia M.J."/>
            <person name="Goble A."/>
            <person name="Goldman G.H."/>
            <person name="Gomi K."/>
            <person name="Griffith-Jones S."/>
            <person name="Gwilliam R."/>
            <person name="Haas B.J."/>
            <person name="Haas H."/>
            <person name="Harris D.E."/>
            <person name="Horiuchi H."/>
            <person name="Huang J."/>
            <person name="Humphray S."/>
            <person name="Jimenez J."/>
            <person name="Keller N."/>
            <person name="Khouri H."/>
            <person name="Kitamoto K."/>
            <person name="Kobayashi T."/>
            <person name="Konzack S."/>
            <person name="Kulkarni R."/>
            <person name="Kumagai T."/>
            <person name="Lafton A."/>
            <person name="Latge J.-P."/>
            <person name="Li W."/>
            <person name="Lord A."/>
            <person name="Lu C."/>
            <person name="Majoros W.H."/>
            <person name="May G.S."/>
            <person name="Miller B.L."/>
            <person name="Mohamoud Y."/>
            <person name="Molina M."/>
            <person name="Monod M."/>
            <person name="Mouyna I."/>
            <person name="Mulligan S."/>
            <person name="Murphy L.D."/>
            <person name="O'Neil S."/>
            <person name="Paulsen I."/>
            <person name="Penalva M.A."/>
            <person name="Pertea M."/>
            <person name="Price C."/>
            <person name="Pritchard B.L."/>
            <person name="Quail M.A."/>
            <person name="Rabbinowitsch E."/>
            <person name="Rawlins N."/>
            <person name="Rajandream M.A."/>
            <person name="Reichard U."/>
            <person name="Renauld H."/>
            <person name="Robson G.D."/>
            <person name="Rodriguez de Cordoba S."/>
            <person name="Rodriguez-Pena J.M."/>
            <person name="Ronning C.M."/>
            <person name="Rutter S."/>
            <person name="Salzberg S.L."/>
            <person name="Sanchez M."/>
            <person name="Sanchez-Ferrero J.C."/>
            <person name="Saunders D."/>
            <person name="Seeger K."/>
            <person name="Squares R."/>
            <person name="Squares S."/>
            <person name="Takeuchi M."/>
            <person name="Tekaia F."/>
            <person name="Turner G."/>
            <person name="Vazquez de Aldana C.R."/>
            <person name="Weidman J."/>
            <person name="White O."/>
            <person name="Woodward J.R."/>
            <person name="Yu J.-H."/>
            <person name="Fraser C.M."/>
            <person name="Galagan J.E."/>
            <person name="Asai K."/>
            <person name="Machida M."/>
            <person name="Hall N."/>
            <person name="Barrell B.G."/>
            <person name="Denning D.W."/>
        </authorList>
    </citation>
    <scope>NUCLEOTIDE SEQUENCE [LARGE SCALE GENOMIC DNA]</scope>
    <source>
        <strain>ATCC MYA-4609 / CBS 101355 / FGSC A1100 / Af293</strain>
    </source>
</reference>